<evidence type="ECO:0000255" key="1">
    <source>
        <dbReference type="HAMAP-Rule" id="MF_03105"/>
    </source>
</evidence>
<evidence type="ECO:0000256" key="2">
    <source>
        <dbReference type="SAM" id="MobiDB-lite"/>
    </source>
</evidence>
<accession>P0CO70</accession>
<accession>Q55SE0</accession>
<accession>Q5KGT4</accession>
<reference key="1">
    <citation type="journal article" date="2005" name="Science">
        <title>The genome of the basidiomycetous yeast and human pathogen Cryptococcus neoformans.</title>
        <authorList>
            <person name="Loftus B.J."/>
            <person name="Fung E."/>
            <person name="Roncaglia P."/>
            <person name="Rowley D."/>
            <person name="Amedeo P."/>
            <person name="Bruno D."/>
            <person name="Vamathevan J."/>
            <person name="Miranda M."/>
            <person name="Anderson I.J."/>
            <person name="Fraser J.A."/>
            <person name="Allen J.E."/>
            <person name="Bosdet I.E."/>
            <person name="Brent M.R."/>
            <person name="Chiu R."/>
            <person name="Doering T.L."/>
            <person name="Donlin M.J."/>
            <person name="D'Souza C.A."/>
            <person name="Fox D.S."/>
            <person name="Grinberg V."/>
            <person name="Fu J."/>
            <person name="Fukushima M."/>
            <person name="Haas B.J."/>
            <person name="Huang J.C."/>
            <person name="Janbon G."/>
            <person name="Jones S.J.M."/>
            <person name="Koo H.L."/>
            <person name="Krzywinski M.I."/>
            <person name="Kwon-Chung K.J."/>
            <person name="Lengeler K.B."/>
            <person name="Maiti R."/>
            <person name="Marra M.A."/>
            <person name="Marra R.E."/>
            <person name="Mathewson C.A."/>
            <person name="Mitchell T.G."/>
            <person name="Pertea M."/>
            <person name="Riggs F.R."/>
            <person name="Salzberg S.L."/>
            <person name="Schein J.E."/>
            <person name="Shvartsbeyn A."/>
            <person name="Shin H."/>
            <person name="Shumway M."/>
            <person name="Specht C.A."/>
            <person name="Suh B.B."/>
            <person name="Tenney A."/>
            <person name="Utterback T.R."/>
            <person name="Wickes B.L."/>
            <person name="Wortman J.R."/>
            <person name="Wye N.H."/>
            <person name="Kronstad J.W."/>
            <person name="Lodge J.K."/>
            <person name="Heitman J."/>
            <person name="Davis R.W."/>
            <person name="Fraser C.M."/>
            <person name="Hyman R.W."/>
        </authorList>
    </citation>
    <scope>NUCLEOTIDE SEQUENCE [LARGE SCALE GENOMIC DNA]</scope>
    <source>
        <strain>JEC21 / ATCC MYA-565</strain>
    </source>
</reference>
<organism>
    <name type="scientific">Cryptococcus neoformans var. neoformans serotype D (strain JEC21 / ATCC MYA-565)</name>
    <name type="common">Filobasidiella neoformans</name>
    <dbReference type="NCBI Taxonomy" id="214684"/>
    <lineage>
        <taxon>Eukaryota</taxon>
        <taxon>Fungi</taxon>
        <taxon>Dikarya</taxon>
        <taxon>Basidiomycota</taxon>
        <taxon>Agaricomycotina</taxon>
        <taxon>Tremellomycetes</taxon>
        <taxon>Tremellales</taxon>
        <taxon>Cryptococcaceae</taxon>
        <taxon>Cryptococcus</taxon>
        <taxon>Cryptococcus neoformans species complex</taxon>
    </lineage>
</organism>
<feature type="chain" id="PRO_0000384340" description="Mitochondrial distribution and morphology protein 34">
    <location>
        <begin position="1"/>
        <end position="343"/>
    </location>
</feature>
<feature type="domain" description="SMP-LTD" evidence="1">
    <location>
        <begin position="1"/>
        <end position="196"/>
    </location>
</feature>
<feature type="region of interest" description="Disordered" evidence="2">
    <location>
        <begin position="227"/>
        <end position="255"/>
    </location>
</feature>
<feature type="region of interest" description="Disordered" evidence="2">
    <location>
        <begin position="300"/>
        <end position="325"/>
    </location>
</feature>
<feature type="compositionally biased region" description="Low complexity" evidence="2">
    <location>
        <begin position="306"/>
        <end position="317"/>
    </location>
</feature>
<protein>
    <recommendedName>
        <fullName evidence="1">Mitochondrial distribution and morphology protein 34</fullName>
    </recommendedName>
</protein>
<name>MDM34_CRYNJ</name>
<dbReference type="EMBL" id="AE017345">
    <property type="protein sequence ID" value="AAW43635.1"/>
    <property type="molecule type" value="Genomic_DNA"/>
</dbReference>
<dbReference type="RefSeq" id="XP_570942.1">
    <property type="nucleotide sequence ID" value="XM_570942.1"/>
</dbReference>
<dbReference type="SMR" id="P0CO70"/>
<dbReference type="STRING" id="214684.P0CO70"/>
<dbReference type="PaxDb" id="214684-P0CO70"/>
<dbReference type="EnsemblFungi" id="AAW43635">
    <property type="protein sequence ID" value="AAW43635"/>
    <property type="gene ID" value="CNE02420"/>
</dbReference>
<dbReference type="GeneID" id="3257916"/>
<dbReference type="KEGG" id="cne:CNE02420"/>
<dbReference type="VEuPathDB" id="FungiDB:CNE02420"/>
<dbReference type="eggNOG" id="ENOG502QT3W">
    <property type="taxonomic scope" value="Eukaryota"/>
</dbReference>
<dbReference type="HOGENOM" id="CLU_036502_0_0_1"/>
<dbReference type="InParanoid" id="P0CO70"/>
<dbReference type="OMA" id="KRETHVI"/>
<dbReference type="OrthoDB" id="17927at2759"/>
<dbReference type="Proteomes" id="UP000002149">
    <property type="component" value="Chromosome 5"/>
</dbReference>
<dbReference type="GO" id="GO:0032865">
    <property type="term" value="C:ERMES complex"/>
    <property type="evidence" value="ECO:0000318"/>
    <property type="project" value="GO_Central"/>
</dbReference>
<dbReference type="GO" id="GO:0008289">
    <property type="term" value="F:lipid binding"/>
    <property type="evidence" value="ECO:0007669"/>
    <property type="project" value="UniProtKB-KW"/>
</dbReference>
<dbReference type="GO" id="GO:0000002">
    <property type="term" value="P:mitochondrial genome maintenance"/>
    <property type="evidence" value="ECO:0007669"/>
    <property type="project" value="UniProtKB-UniRule"/>
</dbReference>
<dbReference type="GO" id="GO:0007005">
    <property type="term" value="P:mitochondrion organization"/>
    <property type="evidence" value="ECO:0000318"/>
    <property type="project" value="GO_Central"/>
</dbReference>
<dbReference type="GO" id="GO:1990456">
    <property type="term" value="P:mitochondrion-endoplasmic reticulum membrane tethering"/>
    <property type="evidence" value="ECO:0000318"/>
    <property type="project" value="GO_Central"/>
</dbReference>
<dbReference type="GO" id="GO:0015914">
    <property type="term" value="P:phospholipid transport"/>
    <property type="evidence" value="ECO:0000318"/>
    <property type="project" value="GO_Central"/>
</dbReference>
<dbReference type="CDD" id="cd21673">
    <property type="entry name" value="SMP_Mdm34"/>
    <property type="match status" value="1"/>
</dbReference>
<dbReference type="HAMAP" id="MF_03105">
    <property type="entry name" value="Mdm34"/>
    <property type="match status" value="1"/>
</dbReference>
<dbReference type="InterPro" id="IPR027536">
    <property type="entry name" value="Mdm34"/>
</dbReference>
<dbReference type="InterPro" id="IPR031468">
    <property type="entry name" value="SMP_LBD"/>
</dbReference>
<dbReference type="PANTHER" id="PTHR28185">
    <property type="entry name" value="MITOCHONDRIAL DISTRIBUTION AND MORPHOLOGY PROTEIN 34"/>
    <property type="match status" value="1"/>
</dbReference>
<dbReference type="PANTHER" id="PTHR28185:SF1">
    <property type="entry name" value="MITOCHONDRIAL DISTRIBUTION AND MORPHOLOGY PROTEIN 34"/>
    <property type="match status" value="1"/>
</dbReference>
<dbReference type="PROSITE" id="PS51847">
    <property type="entry name" value="SMP"/>
    <property type="match status" value="1"/>
</dbReference>
<gene>
    <name evidence="1" type="primary">MDM34</name>
    <name type="ordered locus">CNE02420</name>
</gene>
<sequence>MSFVFPSWSTAFSPAFHEDAKAMLEGALNKGDKPPVIQGKIEVVELHMGEQPPTLTLLEIGDLSIDRFRGILRLGYQGDAWLEVRCRVQANPLSHNPHLTFSTLPLSTPLLASQPLLVPMTLRLSKLHLRAILILVVSASKGITLVFKNDPLQNVDVSSTFDSVEVIRGYLQQEIEGQLREMFREHLPGIIHRLSQKWFSGSGVGGKVEMPYRDMSPVPSYAPINEEVEEEENEENHGTSPGNEESFPPRHIGPGGITLPLNNSVSQLAALSYSAHTLSPYARGHEHIAVRSFPYLGKSGAGTGSSGRASLASSSVGEGDIKAKRKRIFRIGKSKEADEKSEA</sequence>
<proteinExistence type="inferred from homology"/>
<comment type="function">
    <text evidence="1">Component of the ERMES/MDM complex, which serves as a molecular tether to connect the endoplasmic reticulum (ER) and mitochondria. Components of this complex are involved in the control of mitochondrial shape and protein biogenesis, and function in nonvesicular lipid trafficking between the ER and mitochondria. MDM34 is required for the interaction of the ER-resident membrane protein MMM1 and the outer mitochondrial membrane-resident beta-barrel protein MDM10.</text>
</comment>
<comment type="subunit">
    <text evidence="1">Component of the ER-mitochondria encounter structure (ERMES) or MDM complex, composed of MMM1, MDM10, MDM12 and MDM34.</text>
</comment>
<comment type="subcellular location">
    <subcellularLocation>
        <location evidence="1">Mitochondrion outer membrane</location>
        <topology evidence="1">Multi-pass membrane protein</topology>
    </subcellularLocation>
    <text evidence="1">The ERMES/MDM complex localizes to a few discrete foci (around 10 per single cell), that represent mitochondria-endoplasmic reticulum junctions. These foci are often found next to mtDNA nucleoids.</text>
</comment>
<comment type="domain">
    <text evidence="1">Lacks alpha-helical transmembrane segments, suggesting that it resides in the membrane via beta-sheet conformations similar to those predicted for other outer membrane proteins and porin.</text>
</comment>
<comment type="domain">
    <text evidence="1">The SMP-LTD domain is a barrel-like domain that can bind various types of glycerophospholipids in its interior and mediate their transfer between two adjacent bilayers.</text>
</comment>
<comment type="similarity">
    <text evidence="1">Belongs to the MDM34 family.</text>
</comment>
<keyword id="KW-0445">Lipid transport</keyword>
<keyword id="KW-0446">Lipid-binding</keyword>
<keyword id="KW-0472">Membrane</keyword>
<keyword id="KW-0496">Mitochondrion</keyword>
<keyword id="KW-1000">Mitochondrion outer membrane</keyword>
<keyword id="KW-1185">Reference proteome</keyword>
<keyword id="KW-0812">Transmembrane</keyword>
<keyword id="KW-1134">Transmembrane beta strand</keyword>
<keyword id="KW-0813">Transport</keyword>